<gene>
    <name type="primary">Rbm18</name>
</gene>
<accession>Q9CR83</accession>
<accession>Q8CBD4</accession>
<reference key="1">
    <citation type="journal article" date="2005" name="Science">
        <title>The transcriptional landscape of the mammalian genome.</title>
        <authorList>
            <person name="Carninci P."/>
            <person name="Kasukawa T."/>
            <person name="Katayama S."/>
            <person name="Gough J."/>
            <person name="Frith M.C."/>
            <person name="Maeda N."/>
            <person name="Oyama R."/>
            <person name="Ravasi T."/>
            <person name="Lenhard B."/>
            <person name="Wells C."/>
            <person name="Kodzius R."/>
            <person name="Shimokawa K."/>
            <person name="Bajic V.B."/>
            <person name="Brenner S.E."/>
            <person name="Batalov S."/>
            <person name="Forrest A.R."/>
            <person name="Zavolan M."/>
            <person name="Davis M.J."/>
            <person name="Wilming L.G."/>
            <person name="Aidinis V."/>
            <person name="Allen J.E."/>
            <person name="Ambesi-Impiombato A."/>
            <person name="Apweiler R."/>
            <person name="Aturaliya R.N."/>
            <person name="Bailey T.L."/>
            <person name="Bansal M."/>
            <person name="Baxter L."/>
            <person name="Beisel K.W."/>
            <person name="Bersano T."/>
            <person name="Bono H."/>
            <person name="Chalk A.M."/>
            <person name="Chiu K.P."/>
            <person name="Choudhary V."/>
            <person name="Christoffels A."/>
            <person name="Clutterbuck D.R."/>
            <person name="Crowe M.L."/>
            <person name="Dalla E."/>
            <person name="Dalrymple B.P."/>
            <person name="de Bono B."/>
            <person name="Della Gatta G."/>
            <person name="di Bernardo D."/>
            <person name="Down T."/>
            <person name="Engstrom P."/>
            <person name="Fagiolini M."/>
            <person name="Faulkner G."/>
            <person name="Fletcher C.F."/>
            <person name="Fukushima T."/>
            <person name="Furuno M."/>
            <person name="Futaki S."/>
            <person name="Gariboldi M."/>
            <person name="Georgii-Hemming P."/>
            <person name="Gingeras T.R."/>
            <person name="Gojobori T."/>
            <person name="Green R.E."/>
            <person name="Gustincich S."/>
            <person name="Harbers M."/>
            <person name="Hayashi Y."/>
            <person name="Hensch T.K."/>
            <person name="Hirokawa N."/>
            <person name="Hill D."/>
            <person name="Huminiecki L."/>
            <person name="Iacono M."/>
            <person name="Ikeo K."/>
            <person name="Iwama A."/>
            <person name="Ishikawa T."/>
            <person name="Jakt M."/>
            <person name="Kanapin A."/>
            <person name="Katoh M."/>
            <person name="Kawasawa Y."/>
            <person name="Kelso J."/>
            <person name="Kitamura H."/>
            <person name="Kitano H."/>
            <person name="Kollias G."/>
            <person name="Krishnan S.P."/>
            <person name="Kruger A."/>
            <person name="Kummerfeld S.K."/>
            <person name="Kurochkin I.V."/>
            <person name="Lareau L.F."/>
            <person name="Lazarevic D."/>
            <person name="Lipovich L."/>
            <person name="Liu J."/>
            <person name="Liuni S."/>
            <person name="McWilliam S."/>
            <person name="Madan Babu M."/>
            <person name="Madera M."/>
            <person name="Marchionni L."/>
            <person name="Matsuda H."/>
            <person name="Matsuzawa S."/>
            <person name="Miki H."/>
            <person name="Mignone F."/>
            <person name="Miyake S."/>
            <person name="Morris K."/>
            <person name="Mottagui-Tabar S."/>
            <person name="Mulder N."/>
            <person name="Nakano N."/>
            <person name="Nakauchi H."/>
            <person name="Ng P."/>
            <person name="Nilsson R."/>
            <person name="Nishiguchi S."/>
            <person name="Nishikawa S."/>
            <person name="Nori F."/>
            <person name="Ohara O."/>
            <person name="Okazaki Y."/>
            <person name="Orlando V."/>
            <person name="Pang K.C."/>
            <person name="Pavan W.J."/>
            <person name="Pavesi G."/>
            <person name="Pesole G."/>
            <person name="Petrovsky N."/>
            <person name="Piazza S."/>
            <person name="Reed J."/>
            <person name="Reid J.F."/>
            <person name="Ring B.Z."/>
            <person name="Ringwald M."/>
            <person name="Rost B."/>
            <person name="Ruan Y."/>
            <person name="Salzberg S.L."/>
            <person name="Sandelin A."/>
            <person name="Schneider C."/>
            <person name="Schoenbach C."/>
            <person name="Sekiguchi K."/>
            <person name="Semple C.A."/>
            <person name="Seno S."/>
            <person name="Sessa L."/>
            <person name="Sheng Y."/>
            <person name="Shibata Y."/>
            <person name="Shimada H."/>
            <person name="Shimada K."/>
            <person name="Silva D."/>
            <person name="Sinclair B."/>
            <person name="Sperling S."/>
            <person name="Stupka E."/>
            <person name="Sugiura K."/>
            <person name="Sultana R."/>
            <person name="Takenaka Y."/>
            <person name="Taki K."/>
            <person name="Tammoja K."/>
            <person name="Tan S.L."/>
            <person name="Tang S."/>
            <person name="Taylor M.S."/>
            <person name="Tegner J."/>
            <person name="Teichmann S.A."/>
            <person name="Ueda H.R."/>
            <person name="van Nimwegen E."/>
            <person name="Verardo R."/>
            <person name="Wei C.L."/>
            <person name="Yagi K."/>
            <person name="Yamanishi H."/>
            <person name="Zabarovsky E."/>
            <person name="Zhu S."/>
            <person name="Zimmer A."/>
            <person name="Hide W."/>
            <person name="Bult C."/>
            <person name="Grimmond S.M."/>
            <person name="Teasdale R.D."/>
            <person name="Liu E.T."/>
            <person name="Brusic V."/>
            <person name="Quackenbush J."/>
            <person name="Wahlestedt C."/>
            <person name="Mattick J.S."/>
            <person name="Hume D.A."/>
            <person name="Kai C."/>
            <person name="Sasaki D."/>
            <person name="Tomaru Y."/>
            <person name="Fukuda S."/>
            <person name="Kanamori-Katayama M."/>
            <person name="Suzuki M."/>
            <person name="Aoki J."/>
            <person name="Arakawa T."/>
            <person name="Iida J."/>
            <person name="Imamura K."/>
            <person name="Itoh M."/>
            <person name="Kato T."/>
            <person name="Kawaji H."/>
            <person name="Kawagashira N."/>
            <person name="Kawashima T."/>
            <person name="Kojima M."/>
            <person name="Kondo S."/>
            <person name="Konno H."/>
            <person name="Nakano K."/>
            <person name="Ninomiya N."/>
            <person name="Nishio T."/>
            <person name="Okada M."/>
            <person name="Plessy C."/>
            <person name="Shibata K."/>
            <person name="Shiraki T."/>
            <person name="Suzuki S."/>
            <person name="Tagami M."/>
            <person name="Waki K."/>
            <person name="Watahiki A."/>
            <person name="Okamura-Oho Y."/>
            <person name="Suzuki H."/>
            <person name="Kawai J."/>
            <person name="Hayashizaki Y."/>
        </authorList>
    </citation>
    <scope>NUCLEOTIDE SEQUENCE [LARGE SCALE MRNA]</scope>
    <source>
        <strain>C57BL/6J</strain>
        <tissue>Small intestine</tissue>
        <tissue>Urinary bladder</tissue>
    </source>
</reference>
<reference key="2">
    <citation type="journal article" date="2004" name="Genome Res.">
        <title>The status, quality, and expansion of the NIH full-length cDNA project: the Mammalian Gene Collection (MGC).</title>
        <authorList>
            <consortium name="The MGC Project Team"/>
        </authorList>
    </citation>
    <scope>NUCLEOTIDE SEQUENCE [LARGE SCALE MRNA]</scope>
    <source>
        <strain>Czech II</strain>
        <tissue>Mammary tumor</tissue>
    </source>
</reference>
<sequence length="190" mass="21649">METETKTLPLENASILSEGSLQEGHRLWIGNLDPKITEYHLLKLLQKFGKVKQFDFLFHKSGALEGQPRGYCFVNFETKQEAEQAIQCLNGKLALSKKLVVRWAHAQVKRYDHNKNDKILPISLEPSSSTEPAQSNLSVTAKIKAIEAKLKMMAENPDAEYPAAPVYSYFKPPDKKRTTPYSRTAWKSRR</sequence>
<evidence type="ECO:0000255" key="1">
    <source>
        <dbReference type="PROSITE-ProRule" id="PRU00176"/>
    </source>
</evidence>
<evidence type="ECO:0000256" key="2">
    <source>
        <dbReference type="SAM" id="MobiDB-lite"/>
    </source>
</evidence>
<evidence type="ECO:0000305" key="3"/>
<feature type="chain" id="PRO_0000254123" description="Probable RNA-binding protein 18">
    <location>
        <begin position="1"/>
        <end position="190"/>
    </location>
</feature>
<feature type="domain" description="RRM" evidence="1">
    <location>
        <begin position="25"/>
        <end position="106"/>
    </location>
</feature>
<feature type="region of interest" description="Disordered" evidence="2">
    <location>
        <begin position="166"/>
        <end position="190"/>
    </location>
</feature>
<feature type="sequence conflict" description="In Ref. 1; BAC29361." evidence="3" ref="1">
    <original>K</original>
    <variation>R</variation>
    <location>
        <position position="35"/>
    </location>
</feature>
<feature type="sequence conflict" description="In Ref. 1; BAC29361." evidence="3" ref="1">
    <original>A</original>
    <variation>S</variation>
    <location>
        <position position="148"/>
    </location>
</feature>
<name>RBM18_MOUSE</name>
<protein>
    <recommendedName>
        <fullName>Probable RNA-binding protein 18</fullName>
    </recommendedName>
    <alternativeName>
        <fullName>RNA-binding motif protein 18</fullName>
    </alternativeName>
</protein>
<dbReference type="EMBL" id="AK008110">
    <property type="protein sequence ID" value="BAB25466.1"/>
    <property type="molecule type" value="mRNA"/>
</dbReference>
<dbReference type="EMBL" id="AK021243">
    <property type="protein sequence ID" value="BAB32344.1"/>
    <property type="molecule type" value="mRNA"/>
</dbReference>
<dbReference type="EMBL" id="AK035348">
    <property type="protein sequence ID" value="BAC29043.1"/>
    <property type="molecule type" value="mRNA"/>
</dbReference>
<dbReference type="EMBL" id="AK036252">
    <property type="protein sequence ID" value="BAC29361.1"/>
    <property type="molecule type" value="mRNA"/>
</dbReference>
<dbReference type="EMBL" id="BC005540">
    <property type="protein sequence ID" value="AAH05540.1"/>
    <property type="molecule type" value="mRNA"/>
</dbReference>
<dbReference type="CCDS" id="CCDS15969.1"/>
<dbReference type="RefSeq" id="NP_001153107.1">
    <property type="nucleotide sequence ID" value="NM_001159635.1"/>
</dbReference>
<dbReference type="RefSeq" id="NP_080710.1">
    <property type="nucleotide sequence ID" value="NM_026434.4"/>
</dbReference>
<dbReference type="SMR" id="Q9CR83"/>
<dbReference type="FunCoup" id="Q9CR83">
    <property type="interactions" value="3709"/>
</dbReference>
<dbReference type="STRING" id="10090.ENSMUSP00000028251"/>
<dbReference type="iPTMnet" id="Q9CR83"/>
<dbReference type="PhosphoSitePlus" id="Q9CR83"/>
<dbReference type="PaxDb" id="10090-ENSMUSP00000028251"/>
<dbReference type="PeptideAtlas" id="Q9CR83"/>
<dbReference type="ProteomicsDB" id="255120"/>
<dbReference type="Pumba" id="Q9CR83"/>
<dbReference type="Antibodypedia" id="44495">
    <property type="antibodies" value="20 antibodies from 8 providers"/>
</dbReference>
<dbReference type="DNASU" id="67889"/>
<dbReference type="Ensembl" id="ENSMUST00000028251.10">
    <property type="protein sequence ID" value="ENSMUSP00000028251.4"/>
    <property type="gene ID" value="ENSMUSG00000026889.13"/>
</dbReference>
<dbReference type="GeneID" id="67889"/>
<dbReference type="KEGG" id="mmu:67889"/>
<dbReference type="UCSC" id="uc008jlh.2">
    <property type="organism name" value="mouse"/>
</dbReference>
<dbReference type="AGR" id="MGI:1915139"/>
<dbReference type="CTD" id="92400"/>
<dbReference type="MGI" id="MGI:1915139">
    <property type="gene designation" value="Rbm18"/>
</dbReference>
<dbReference type="VEuPathDB" id="HostDB:ENSMUSG00000026889"/>
<dbReference type="eggNOG" id="ENOG502RH7I">
    <property type="taxonomic scope" value="Eukaryota"/>
</dbReference>
<dbReference type="GeneTree" id="ENSGT00390000013765"/>
<dbReference type="HOGENOM" id="CLU_066926_2_0_1"/>
<dbReference type="InParanoid" id="Q9CR83"/>
<dbReference type="OMA" id="FACGRPL"/>
<dbReference type="OrthoDB" id="6730379at2759"/>
<dbReference type="PhylomeDB" id="Q9CR83"/>
<dbReference type="TreeFam" id="TF323314"/>
<dbReference type="BioGRID-ORCS" id="67889">
    <property type="hits" value="10 hits in 77 CRISPR screens"/>
</dbReference>
<dbReference type="ChiTaRS" id="Rbm18">
    <property type="organism name" value="mouse"/>
</dbReference>
<dbReference type="PRO" id="PR:Q9CR83"/>
<dbReference type="Proteomes" id="UP000000589">
    <property type="component" value="Chromosome 2"/>
</dbReference>
<dbReference type="RNAct" id="Q9CR83">
    <property type="molecule type" value="protein"/>
</dbReference>
<dbReference type="Bgee" id="ENSMUSG00000026889">
    <property type="expression patterns" value="Expressed in secondary oocyte and 264 other cell types or tissues"/>
</dbReference>
<dbReference type="ExpressionAtlas" id="Q9CR83">
    <property type="expression patterns" value="baseline and differential"/>
</dbReference>
<dbReference type="GO" id="GO:0005829">
    <property type="term" value="C:cytosol"/>
    <property type="evidence" value="ECO:0007669"/>
    <property type="project" value="Ensembl"/>
</dbReference>
<dbReference type="GO" id="GO:0045171">
    <property type="term" value="C:intercellular bridge"/>
    <property type="evidence" value="ECO:0007669"/>
    <property type="project" value="Ensembl"/>
</dbReference>
<dbReference type="GO" id="GO:0005654">
    <property type="term" value="C:nucleoplasm"/>
    <property type="evidence" value="ECO:0007669"/>
    <property type="project" value="Ensembl"/>
</dbReference>
<dbReference type="GO" id="GO:0003723">
    <property type="term" value="F:RNA binding"/>
    <property type="evidence" value="ECO:0007669"/>
    <property type="project" value="UniProtKB-KW"/>
</dbReference>
<dbReference type="CDD" id="cd12355">
    <property type="entry name" value="RRM_RBM18"/>
    <property type="match status" value="1"/>
</dbReference>
<dbReference type="FunFam" id="3.30.70.330:FF:000185">
    <property type="entry name" value="Probable RNA-binding protein 18"/>
    <property type="match status" value="1"/>
</dbReference>
<dbReference type="Gene3D" id="3.30.70.330">
    <property type="match status" value="1"/>
</dbReference>
<dbReference type="InterPro" id="IPR012677">
    <property type="entry name" value="Nucleotide-bd_a/b_plait_sf"/>
</dbReference>
<dbReference type="InterPro" id="IPR035979">
    <property type="entry name" value="RBD_domain_sf"/>
</dbReference>
<dbReference type="InterPro" id="IPR039157">
    <property type="entry name" value="RBM18_RRM"/>
</dbReference>
<dbReference type="InterPro" id="IPR000504">
    <property type="entry name" value="RRM_dom"/>
</dbReference>
<dbReference type="PANTHER" id="PTHR21245">
    <property type="entry name" value="HETEROGENEOUS NUCLEAR RIBONUCLEOPROTEIN"/>
    <property type="match status" value="1"/>
</dbReference>
<dbReference type="Pfam" id="PF00076">
    <property type="entry name" value="RRM_1"/>
    <property type="match status" value="1"/>
</dbReference>
<dbReference type="SMART" id="SM00360">
    <property type="entry name" value="RRM"/>
    <property type="match status" value="1"/>
</dbReference>
<dbReference type="SUPFAM" id="SSF54928">
    <property type="entry name" value="RNA-binding domain, RBD"/>
    <property type="match status" value="1"/>
</dbReference>
<dbReference type="PROSITE" id="PS50102">
    <property type="entry name" value="RRM"/>
    <property type="match status" value="1"/>
</dbReference>
<keyword id="KW-1185">Reference proteome</keyword>
<keyword id="KW-0694">RNA-binding</keyword>
<proteinExistence type="evidence at transcript level"/>
<organism>
    <name type="scientific">Mus musculus</name>
    <name type="common">Mouse</name>
    <dbReference type="NCBI Taxonomy" id="10090"/>
    <lineage>
        <taxon>Eukaryota</taxon>
        <taxon>Metazoa</taxon>
        <taxon>Chordata</taxon>
        <taxon>Craniata</taxon>
        <taxon>Vertebrata</taxon>
        <taxon>Euteleostomi</taxon>
        <taxon>Mammalia</taxon>
        <taxon>Eutheria</taxon>
        <taxon>Euarchontoglires</taxon>
        <taxon>Glires</taxon>
        <taxon>Rodentia</taxon>
        <taxon>Myomorpha</taxon>
        <taxon>Muroidea</taxon>
        <taxon>Muridae</taxon>
        <taxon>Murinae</taxon>
        <taxon>Mus</taxon>
        <taxon>Mus</taxon>
    </lineage>
</organism>